<sequence>MPKMKTHRGAAKRVKRTASGQLKRSRAFTSHLFANKSTKQKRQLRKARLVSKSDMKRVKQLLAYKK</sequence>
<gene>
    <name evidence="1" type="primary">rpmI</name>
    <name type="ordered locus">SAUSA300_1626</name>
</gene>
<evidence type="ECO:0000255" key="1">
    <source>
        <dbReference type="HAMAP-Rule" id="MF_00514"/>
    </source>
</evidence>
<evidence type="ECO:0000256" key="2">
    <source>
        <dbReference type="SAM" id="MobiDB-lite"/>
    </source>
</evidence>
<evidence type="ECO:0000305" key="3"/>
<keyword id="KW-0687">Ribonucleoprotein</keyword>
<keyword id="KW-0689">Ribosomal protein</keyword>
<organism>
    <name type="scientific">Staphylococcus aureus (strain USA300)</name>
    <dbReference type="NCBI Taxonomy" id="367830"/>
    <lineage>
        <taxon>Bacteria</taxon>
        <taxon>Bacillati</taxon>
        <taxon>Bacillota</taxon>
        <taxon>Bacilli</taxon>
        <taxon>Bacillales</taxon>
        <taxon>Staphylococcaceae</taxon>
        <taxon>Staphylococcus</taxon>
    </lineage>
</organism>
<name>RL35_STAA3</name>
<reference key="1">
    <citation type="journal article" date="2006" name="Lancet">
        <title>Complete genome sequence of USA300, an epidemic clone of community-acquired meticillin-resistant Staphylococcus aureus.</title>
        <authorList>
            <person name="Diep B.A."/>
            <person name="Gill S.R."/>
            <person name="Chang R.F."/>
            <person name="Phan T.H."/>
            <person name="Chen J.H."/>
            <person name="Davidson M.G."/>
            <person name="Lin F."/>
            <person name="Lin J."/>
            <person name="Carleton H.A."/>
            <person name="Mongodin E.F."/>
            <person name="Sensabaugh G.F."/>
            <person name="Perdreau-Remington F."/>
        </authorList>
    </citation>
    <scope>NUCLEOTIDE SEQUENCE [LARGE SCALE GENOMIC DNA]</scope>
    <source>
        <strain>USA300</strain>
    </source>
</reference>
<comment type="similarity">
    <text evidence="1">Belongs to the bacterial ribosomal protein bL35 family.</text>
</comment>
<accession>Q2FG57</accession>
<feature type="chain" id="PRO_0000258760" description="Large ribosomal subunit protein bL35">
    <location>
        <begin position="1"/>
        <end position="66"/>
    </location>
</feature>
<feature type="region of interest" description="Disordered" evidence="2">
    <location>
        <begin position="1"/>
        <end position="49"/>
    </location>
</feature>
<feature type="compositionally biased region" description="Basic residues" evidence="2">
    <location>
        <begin position="1"/>
        <end position="16"/>
    </location>
</feature>
<feature type="compositionally biased region" description="Basic residues" evidence="2">
    <location>
        <begin position="38"/>
        <end position="49"/>
    </location>
</feature>
<dbReference type="EMBL" id="CP000255">
    <property type="protein sequence ID" value="ABD21830.1"/>
    <property type="molecule type" value="Genomic_DNA"/>
</dbReference>
<dbReference type="RefSeq" id="WP_001125540.1">
    <property type="nucleotide sequence ID" value="NZ_CP027476.1"/>
</dbReference>
<dbReference type="SMR" id="Q2FG57"/>
<dbReference type="GeneID" id="98346041"/>
<dbReference type="KEGG" id="saa:SAUSA300_1626"/>
<dbReference type="HOGENOM" id="CLU_169643_3_0_9"/>
<dbReference type="Proteomes" id="UP000001939">
    <property type="component" value="Chromosome"/>
</dbReference>
<dbReference type="GO" id="GO:0022625">
    <property type="term" value="C:cytosolic large ribosomal subunit"/>
    <property type="evidence" value="ECO:0007669"/>
    <property type="project" value="TreeGrafter"/>
</dbReference>
<dbReference type="GO" id="GO:0003735">
    <property type="term" value="F:structural constituent of ribosome"/>
    <property type="evidence" value="ECO:0007669"/>
    <property type="project" value="InterPro"/>
</dbReference>
<dbReference type="GO" id="GO:0006412">
    <property type="term" value="P:translation"/>
    <property type="evidence" value="ECO:0007669"/>
    <property type="project" value="UniProtKB-UniRule"/>
</dbReference>
<dbReference type="FunFam" id="4.10.410.60:FF:000001">
    <property type="entry name" value="50S ribosomal protein L35"/>
    <property type="match status" value="1"/>
</dbReference>
<dbReference type="Gene3D" id="4.10.410.60">
    <property type="match status" value="1"/>
</dbReference>
<dbReference type="HAMAP" id="MF_00514">
    <property type="entry name" value="Ribosomal_bL35"/>
    <property type="match status" value="1"/>
</dbReference>
<dbReference type="InterPro" id="IPR001706">
    <property type="entry name" value="Ribosomal_bL35"/>
</dbReference>
<dbReference type="InterPro" id="IPR021137">
    <property type="entry name" value="Ribosomal_bL35-like"/>
</dbReference>
<dbReference type="InterPro" id="IPR018265">
    <property type="entry name" value="Ribosomal_bL35_CS"/>
</dbReference>
<dbReference type="InterPro" id="IPR037229">
    <property type="entry name" value="Ribosomal_bL35_sf"/>
</dbReference>
<dbReference type="NCBIfam" id="TIGR00001">
    <property type="entry name" value="rpmI_bact"/>
    <property type="match status" value="1"/>
</dbReference>
<dbReference type="PANTHER" id="PTHR33343">
    <property type="entry name" value="54S RIBOSOMAL PROTEIN BL35M"/>
    <property type="match status" value="1"/>
</dbReference>
<dbReference type="PANTHER" id="PTHR33343:SF1">
    <property type="entry name" value="LARGE RIBOSOMAL SUBUNIT PROTEIN BL35M"/>
    <property type="match status" value="1"/>
</dbReference>
<dbReference type="Pfam" id="PF01632">
    <property type="entry name" value="Ribosomal_L35p"/>
    <property type="match status" value="1"/>
</dbReference>
<dbReference type="PRINTS" id="PR00064">
    <property type="entry name" value="RIBOSOMALL35"/>
</dbReference>
<dbReference type="SUPFAM" id="SSF143034">
    <property type="entry name" value="L35p-like"/>
    <property type="match status" value="1"/>
</dbReference>
<dbReference type="PROSITE" id="PS00936">
    <property type="entry name" value="RIBOSOMAL_L35"/>
    <property type="match status" value="1"/>
</dbReference>
<protein>
    <recommendedName>
        <fullName evidence="1">Large ribosomal subunit protein bL35</fullName>
    </recommendedName>
    <alternativeName>
        <fullName evidence="3">50S ribosomal protein L35</fullName>
    </alternativeName>
</protein>
<proteinExistence type="inferred from homology"/>